<feature type="chain" id="PRO_0000103242" description="Probable 5-dehydro-4-deoxyglucarate dehydratase 2">
    <location>
        <begin position="1"/>
        <end position="322"/>
    </location>
</feature>
<protein>
    <recommendedName>
        <fullName>Probable 5-dehydro-4-deoxyglucarate dehydratase 2</fullName>
        <ecNumber>4.2.1.41</ecNumber>
    </recommendedName>
    <alternativeName>
        <fullName>5-keto-4-deoxy-glucarate dehydratase 2</fullName>
        <shortName>KDGDH 2</shortName>
    </alternativeName>
</protein>
<sequence>MTSAGPGSDPGTGRAAVVRRLREGMAASVLSFPLTSFHEDGSFDADGYRAYVAERLAAGPGALFPACGTGEFFSLDEDEYRQAVAIAVEETAGSVPVVAGTGYGWAQALRFARIAEDAGADALLVMPHYLTAAPQDGLVAQMERIAAGTRLPLIAYQRGQVAYTAESVRRLTRVPGVIGLKDGHSDLDRLQRAVLAAPDDFLFFNGAATAEVQARAYAAVGVPAYSSAVHAFAPEIANAFLAALRGGDTGTVDKLLRDFYVPLVELRDRVPGYAVSLVKAAARLRGCPVGPVRAPLTDPSPADLAALTTLLTTGLDLVGAAL</sequence>
<accession>Q9RDE8</accession>
<dbReference type="EC" id="4.2.1.41"/>
<dbReference type="EMBL" id="AL939113">
    <property type="protein sequence ID" value="CAB66221.1"/>
    <property type="molecule type" value="Genomic_DNA"/>
</dbReference>
<dbReference type="RefSeq" id="NP_626781.1">
    <property type="nucleotide sequence ID" value="NC_003888.3"/>
</dbReference>
<dbReference type="RefSeq" id="WP_011028418.1">
    <property type="nucleotide sequence ID" value="NZ_VNID01000001.1"/>
</dbReference>
<dbReference type="SMR" id="Q9RDE8"/>
<dbReference type="STRING" id="100226.gene:17760145"/>
<dbReference type="PaxDb" id="100226-SCO2543"/>
<dbReference type="KEGG" id="sco:SCO2543"/>
<dbReference type="PATRIC" id="fig|100226.15.peg.2588"/>
<dbReference type="eggNOG" id="COG0329">
    <property type="taxonomic scope" value="Bacteria"/>
</dbReference>
<dbReference type="HOGENOM" id="CLU_049343_5_2_11"/>
<dbReference type="InParanoid" id="Q9RDE8"/>
<dbReference type="OrthoDB" id="8995637at2"/>
<dbReference type="PhylomeDB" id="Q9RDE8"/>
<dbReference type="UniPathway" id="UPA00564">
    <property type="reaction ID" value="UER00628"/>
</dbReference>
<dbReference type="Proteomes" id="UP000001973">
    <property type="component" value="Chromosome"/>
</dbReference>
<dbReference type="GO" id="GO:0008840">
    <property type="term" value="F:4-hydroxy-tetrahydrodipicolinate synthase activity"/>
    <property type="evidence" value="ECO:0000318"/>
    <property type="project" value="GO_Central"/>
</dbReference>
<dbReference type="GO" id="GO:0047448">
    <property type="term" value="F:5-dehydro-4-deoxyglucarate dehydratase activity"/>
    <property type="evidence" value="ECO:0007669"/>
    <property type="project" value="UniProtKB-UniRule"/>
</dbReference>
<dbReference type="GO" id="GO:0042838">
    <property type="term" value="P:D-glucarate catabolic process"/>
    <property type="evidence" value="ECO:0007669"/>
    <property type="project" value="UniProtKB-UniRule"/>
</dbReference>
<dbReference type="CDD" id="cd00951">
    <property type="entry name" value="KDGDH"/>
    <property type="match status" value="1"/>
</dbReference>
<dbReference type="Gene3D" id="3.20.20.70">
    <property type="entry name" value="Aldolase class I"/>
    <property type="match status" value="1"/>
</dbReference>
<dbReference type="HAMAP" id="MF_00694">
    <property type="entry name" value="KDGDH"/>
    <property type="match status" value="1"/>
</dbReference>
<dbReference type="InterPro" id="IPR013785">
    <property type="entry name" value="Aldolase_TIM"/>
</dbReference>
<dbReference type="InterPro" id="IPR002220">
    <property type="entry name" value="DapA-like"/>
</dbReference>
<dbReference type="InterPro" id="IPR017655">
    <property type="entry name" value="Dehydro-deoxyglucarate_dehyd"/>
</dbReference>
<dbReference type="NCBIfam" id="NF002958">
    <property type="entry name" value="PRK03620.1"/>
    <property type="match status" value="1"/>
</dbReference>
<dbReference type="PANTHER" id="PTHR12128:SF19">
    <property type="entry name" value="5-DEHYDRO-4-DEOXYGLUCARATE DEHYDRATASE 2-RELATED"/>
    <property type="match status" value="1"/>
</dbReference>
<dbReference type="PANTHER" id="PTHR12128">
    <property type="entry name" value="DIHYDRODIPICOLINATE SYNTHASE"/>
    <property type="match status" value="1"/>
</dbReference>
<dbReference type="Pfam" id="PF00701">
    <property type="entry name" value="DHDPS"/>
    <property type="match status" value="1"/>
</dbReference>
<dbReference type="PIRSF" id="PIRSF001365">
    <property type="entry name" value="DHDPS"/>
    <property type="match status" value="1"/>
</dbReference>
<dbReference type="SMART" id="SM01130">
    <property type="entry name" value="DHDPS"/>
    <property type="match status" value="1"/>
</dbReference>
<dbReference type="SUPFAM" id="SSF51569">
    <property type="entry name" value="Aldolase"/>
    <property type="match status" value="1"/>
</dbReference>
<proteinExistence type="inferred from homology"/>
<gene>
    <name type="ordered locus">SCO2543</name>
    <name type="ORF">SCC77.10c</name>
</gene>
<evidence type="ECO:0000305" key="1"/>
<organism>
    <name type="scientific">Streptomyces coelicolor (strain ATCC BAA-471 / A3(2) / M145)</name>
    <dbReference type="NCBI Taxonomy" id="100226"/>
    <lineage>
        <taxon>Bacteria</taxon>
        <taxon>Bacillati</taxon>
        <taxon>Actinomycetota</taxon>
        <taxon>Actinomycetes</taxon>
        <taxon>Kitasatosporales</taxon>
        <taxon>Streptomycetaceae</taxon>
        <taxon>Streptomyces</taxon>
        <taxon>Streptomyces albidoflavus group</taxon>
    </lineage>
</organism>
<comment type="catalytic activity">
    <reaction>
        <text>5-dehydro-4-deoxy-D-glucarate + H(+) = 2,5-dioxopentanoate + CO2 + H2O</text>
        <dbReference type="Rhea" id="RHEA:24608"/>
        <dbReference type="ChEBI" id="CHEBI:15377"/>
        <dbReference type="ChEBI" id="CHEBI:15378"/>
        <dbReference type="ChEBI" id="CHEBI:16526"/>
        <dbReference type="ChEBI" id="CHEBI:42819"/>
        <dbReference type="ChEBI" id="CHEBI:58136"/>
        <dbReference type="EC" id="4.2.1.41"/>
    </reaction>
</comment>
<comment type="pathway">
    <text>Carbohydrate acid metabolism; D-glucarate degradation; 2,5-dioxopentanoate from D-glucarate: step 2/2.</text>
</comment>
<comment type="similarity">
    <text evidence="1">Belongs to the DapA family.</text>
</comment>
<keyword id="KW-0456">Lyase</keyword>
<keyword id="KW-1185">Reference proteome</keyword>
<name>KDGD2_STRCO</name>
<reference key="1">
    <citation type="journal article" date="2002" name="Nature">
        <title>Complete genome sequence of the model actinomycete Streptomyces coelicolor A3(2).</title>
        <authorList>
            <person name="Bentley S.D."/>
            <person name="Chater K.F."/>
            <person name="Cerdeno-Tarraga A.-M."/>
            <person name="Challis G.L."/>
            <person name="Thomson N.R."/>
            <person name="James K.D."/>
            <person name="Harris D.E."/>
            <person name="Quail M.A."/>
            <person name="Kieser H."/>
            <person name="Harper D."/>
            <person name="Bateman A."/>
            <person name="Brown S."/>
            <person name="Chandra G."/>
            <person name="Chen C.W."/>
            <person name="Collins M."/>
            <person name="Cronin A."/>
            <person name="Fraser A."/>
            <person name="Goble A."/>
            <person name="Hidalgo J."/>
            <person name="Hornsby T."/>
            <person name="Howarth S."/>
            <person name="Huang C.-H."/>
            <person name="Kieser T."/>
            <person name="Larke L."/>
            <person name="Murphy L.D."/>
            <person name="Oliver K."/>
            <person name="O'Neil S."/>
            <person name="Rabbinowitsch E."/>
            <person name="Rajandream M.A."/>
            <person name="Rutherford K.M."/>
            <person name="Rutter S."/>
            <person name="Seeger K."/>
            <person name="Saunders D."/>
            <person name="Sharp S."/>
            <person name="Squares R."/>
            <person name="Squares S."/>
            <person name="Taylor K."/>
            <person name="Warren T."/>
            <person name="Wietzorrek A."/>
            <person name="Woodward J.R."/>
            <person name="Barrell B.G."/>
            <person name="Parkhill J."/>
            <person name="Hopwood D.A."/>
        </authorList>
    </citation>
    <scope>NUCLEOTIDE SEQUENCE [LARGE SCALE GENOMIC DNA]</scope>
    <source>
        <strain>ATCC BAA-471 / A3(2) / M145</strain>
    </source>
</reference>